<comment type="function">
    <text evidence="1">Has nucleoside phosphatase activity towards nucleoside triphosphates and nucleoside diphosphates.</text>
</comment>
<comment type="catalytic activity">
    <reaction evidence="1">
        <text>a ribonucleoside 5'-triphosphate + H2O = a ribonucleoside 5'-diphosphate + phosphate + H(+)</text>
        <dbReference type="Rhea" id="RHEA:23680"/>
        <dbReference type="ChEBI" id="CHEBI:15377"/>
        <dbReference type="ChEBI" id="CHEBI:15378"/>
        <dbReference type="ChEBI" id="CHEBI:43474"/>
        <dbReference type="ChEBI" id="CHEBI:57930"/>
        <dbReference type="ChEBI" id="CHEBI:61557"/>
        <dbReference type="EC" id="3.6.1.15"/>
    </reaction>
</comment>
<comment type="catalytic activity">
    <reaction evidence="1">
        <text>a ribonucleoside 5'-diphosphate + H2O = a ribonucleoside 5'-phosphate + phosphate + H(+)</text>
        <dbReference type="Rhea" id="RHEA:36799"/>
        <dbReference type="ChEBI" id="CHEBI:15377"/>
        <dbReference type="ChEBI" id="CHEBI:15378"/>
        <dbReference type="ChEBI" id="CHEBI:43474"/>
        <dbReference type="ChEBI" id="CHEBI:57930"/>
        <dbReference type="ChEBI" id="CHEBI:58043"/>
        <dbReference type="EC" id="3.6.1.6"/>
    </reaction>
</comment>
<comment type="cofactor">
    <cofactor evidence="1">
        <name>Mg(2+)</name>
        <dbReference type="ChEBI" id="CHEBI:18420"/>
    </cofactor>
</comment>
<comment type="similarity">
    <text evidence="1">Belongs to the Ntdp family.</text>
</comment>
<gene>
    <name type="ordered locus">BCQ_0555</name>
</gene>
<evidence type="ECO:0000255" key="1">
    <source>
        <dbReference type="HAMAP-Rule" id="MF_01568"/>
    </source>
</evidence>
<protein>
    <recommendedName>
        <fullName evidence="1">Nucleoside triphosphate/diphosphate phosphatase</fullName>
        <ecNumber evidence="1">3.6.1.15</ecNumber>
        <ecNumber evidence="1">3.6.1.6</ecNumber>
    </recommendedName>
</protein>
<organism>
    <name type="scientific">Bacillus cereus (strain Q1)</name>
    <dbReference type="NCBI Taxonomy" id="361100"/>
    <lineage>
        <taxon>Bacteria</taxon>
        <taxon>Bacillati</taxon>
        <taxon>Bacillota</taxon>
        <taxon>Bacilli</taxon>
        <taxon>Bacillales</taxon>
        <taxon>Bacillaceae</taxon>
        <taxon>Bacillus</taxon>
        <taxon>Bacillus cereus group</taxon>
    </lineage>
</organism>
<accession>B9J2V8</accession>
<feature type="chain" id="PRO_1000185471" description="Nucleoside triphosphate/diphosphate phosphatase">
    <location>
        <begin position="1"/>
        <end position="176"/>
    </location>
</feature>
<feature type="active site" description="Proton donor" evidence="1">
    <location>
        <position position="23"/>
    </location>
</feature>
<feature type="binding site" evidence="1">
    <location>
        <position position="87"/>
    </location>
    <ligand>
        <name>Mg(2+)</name>
        <dbReference type="ChEBI" id="CHEBI:18420"/>
        <label>1</label>
    </ligand>
</feature>
<feature type="binding site" evidence="1">
    <location>
        <position position="103"/>
    </location>
    <ligand>
        <name>Mg(2+)</name>
        <dbReference type="ChEBI" id="CHEBI:18420"/>
        <label>1</label>
    </ligand>
</feature>
<feature type="binding site" evidence="1">
    <location>
        <position position="105"/>
    </location>
    <ligand>
        <name>Mg(2+)</name>
        <dbReference type="ChEBI" id="CHEBI:18420"/>
        <label>2</label>
    </ligand>
</feature>
<feature type="binding site" evidence="1">
    <location>
        <position position="107"/>
    </location>
    <ligand>
        <name>Mg(2+)</name>
        <dbReference type="ChEBI" id="CHEBI:18420"/>
        <label>1</label>
    </ligand>
</feature>
<feature type="binding site" evidence="1">
    <location>
        <position position="107"/>
    </location>
    <ligand>
        <name>Mg(2+)</name>
        <dbReference type="ChEBI" id="CHEBI:18420"/>
        <label>2</label>
    </ligand>
</feature>
<feature type="binding site" evidence="1">
    <location>
        <position position="120"/>
    </location>
    <ligand>
        <name>Mg(2+)</name>
        <dbReference type="ChEBI" id="CHEBI:18420"/>
        <label>2</label>
    </ligand>
</feature>
<feature type="binding site" evidence="1">
    <location>
        <position position="123"/>
    </location>
    <ligand>
        <name>Mg(2+)</name>
        <dbReference type="ChEBI" id="CHEBI:18420"/>
        <label>2</label>
    </ligand>
</feature>
<dbReference type="EC" id="3.6.1.15" evidence="1"/>
<dbReference type="EC" id="3.6.1.6" evidence="1"/>
<dbReference type="EMBL" id="CP000227">
    <property type="protein sequence ID" value="ACM11027.1"/>
    <property type="molecule type" value="Genomic_DNA"/>
</dbReference>
<dbReference type="SMR" id="B9J2V8"/>
<dbReference type="KEGG" id="bcq:BCQ_0555"/>
<dbReference type="HOGENOM" id="CLU_109787_1_0_9"/>
<dbReference type="Proteomes" id="UP000000441">
    <property type="component" value="Chromosome"/>
</dbReference>
<dbReference type="GO" id="GO:0000287">
    <property type="term" value="F:magnesium ion binding"/>
    <property type="evidence" value="ECO:0007669"/>
    <property type="project" value="UniProtKB-UniRule"/>
</dbReference>
<dbReference type="GO" id="GO:0017110">
    <property type="term" value="F:nucleoside diphosphate phosphatase activity"/>
    <property type="evidence" value="ECO:0007669"/>
    <property type="project" value="UniProtKB-UniRule"/>
</dbReference>
<dbReference type="GO" id="GO:0017111">
    <property type="term" value="F:ribonucleoside triphosphate phosphatase activity"/>
    <property type="evidence" value="ECO:0007669"/>
    <property type="project" value="UniProtKB-UniRule"/>
</dbReference>
<dbReference type="Gene3D" id="2.40.380.10">
    <property type="entry name" value="FomD-like"/>
    <property type="match status" value="1"/>
</dbReference>
<dbReference type="HAMAP" id="MF_01568">
    <property type="entry name" value="Ntdp"/>
    <property type="match status" value="1"/>
</dbReference>
<dbReference type="InterPro" id="IPR007295">
    <property type="entry name" value="DUF402"/>
</dbReference>
<dbReference type="InterPro" id="IPR035930">
    <property type="entry name" value="FomD-like_sf"/>
</dbReference>
<dbReference type="InterPro" id="IPR050212">
    <property type="entry name" value="Ntdp-like"/>
</dbReference>
<dbReference type="InterPro" id="IPR016882">
    <property type="entry name" value="SA1684"/>
</dbReference>
<dbReference type="NCBIfam" id="NF010183">
    <property type="entry name" value="PRK13662.1"/>
    <property type="match status" value="1"/>
</dbReference>
<dbReference type="PANTHER" id="PTHR39159">
    <property type="match status" value="1"/>
</dbReference>
<dbReference type="PANTHER" id="PTHR39159:SF1">
    <property type="entry name" value="UPF0374 PROTEIN YGAC"/>
    <property type="match status" value="1"/>
</dbReference>
<dbReference type="Pfam" id="PF04167">
    <property type="entry name" value="DUF402"/>
    <property type="match status" value="1"/>
</dbReference>
<dbReference type="PIRSF" id="PIRSF028345">
    <property type="entry name" value="UCP028345"/>
    <property type="match status" value="1"/>
</dbReference>
<dbReference type="SUPFAM" id="SSF159234">
    <property type="entry name" value="FomD-like"/>
    <property type="match status" value="1"/>
</dbReference>
<reference key="1">
    <citation type="journal article" date="2009" name="J. Bacteriol.">
        <title>Complete genome sequence of the extremophilic Bacillus cereus strain Q1 with industrial applications.</title>
        <authorList>
            <person name="Xiong Z."/>
            <person name="Jiang Y."/>
            <person name="Qi D."/>
            <person name="Lu H."/>
            <person name="Yang F."/>
            <person name="Yang J."/>
            <person name="Chen L."/>
            <person name="Sun L."/>
            <person name="Xu X."/>
            <person name="Xue Y."/>
            <person name="Zhu Y."/>
            <person name="Jin Q."/>
        </authorList>
    </citation>
    <scope>NUCLEOTIDE SEQUENCE [LARGE SCALE GENOMIC DNA]</scope>
    <source>
        <strain>Q1</strain>
    </source>
</reference>
<name>NTDP_BACCQ</name>
<keyword id="KW-0378">Hydrolase</keyword>
<keyword id="KW-0460">Magnesium</keyword>
<keyword id="KW-0479">Metal-binding</keyword>
<sequence>MGFPKEGEKVQIHSYKHNGSIHRMWEETTILKGTQSLVIGANDRTVVTESDGRTWITREPAICYFHANYWFNVIGMLREEGVYYYCNLSSPFAYDSEALKYIDYDLDIKVYPDMTYTLLDEDEYEKHSQIMQYPPVIDTILKRNVAQLTQWIHQRKGPFAPDFVDMWYERYLMYRN</sequence>
<proteinExistence type="inferred from homology"/>